<evidence type="ECO:0000250" key="1"/>
<evidence type="ECO:0000255" key="2"/>
<evidence type="ECO:0000255" key="3">
    <source>
        <dbReference type="PROSITE-ProRule" id="PRU00623"/>
    </source>
</evidence>
<evidence type="ECO:0000256" key="4">
    <source>
        <dbReference type="SAM" id="MobiDB-lite"/>
    </source>
</evidence>
<evidence type="ECO:0000269" key="5">
    <source>
    </source>
</evidence>
<evidence type="ECO:0000269" key="6">
    <source>
    </source>
</evidence>
<evidence type="ECO:0000305" key="7"/>
<feature type="chain" id="PRO_0000422766" description="Probable E3 ubiquitin ligase SUD1">
    <location>
        <begin position="1"/>
        <end position="1108"/>
    </location>
</feature>
<feature type="transmembrane region" description="Helical" evidence="2">
    <location>
        <begin position="157"/>
        <end position="177"/>
    </location>
</feature>
<feature type="transmembrane region" description="Helical" evidence="2">
    <location>
        <begin position="197"/>
        <end position="217"/>
    </location>
</feature>
<feature type="transmembrane region" description="Helical" evidence="2">
    <location>
        <begin position="339"/>
        <end position="359"/>
    </location>
</feature>
<feature type="transmembrane region" description="Helical" evidence="2">
    <location>
        <begin position="362"/>
        <end position="382"/>
    </location>
</feature>
<feature type="transmembrane region" description="Helical" evidence="2">
    <location>
        <begin position="462"/>
        <end position="482"/>
    </location>
</feature>
<feature type="transmembrane region" description="Helical" evidence="2">
    <location>
        <begin position="489"/>
        <end position="509"/>
    </location>
</feature>
<feature type="transmembrane region" description="Helical" evidence="2">
    <location>
        <begin position="525"/>
        <end position="545"/>
    </location>
</feature>
<feature type="transmembrane region" description="Helical" evidence="2">
    <location>
        <begin position="572"/>
        <end position="592"/>
    </location>
</feature>
<feature type="transmembrane region" description="Helical" evidence="2">
    <location>
        <begin position="630"/>
        <end position="650"/>
    </location>
</feature>
<feature type="transmembrane region" description="Helical" evidence="2">
    <location>
        <begin position="669"/>
        <end position="689"/>
    </location>
</feature>
<feature type="transmembrane region" description="Helical" evidence="2">
    <location>
        <begin position="796"/>
        <end position="816"/>
    </location>
</feature>
<feature type="transmembrane region" description="Helical" evidence="2">
    <location>
        <begin position="844"/>
        <end position="864"/>
    </location>
</feature>
<feature type="transmembrane region" description="Helical" evidence="2">
    <location>
        <begin position="894"/>
        <end position="914"/>
    </location>
</feature>
<feature type="transmembrane region" description="Helical" evidence="2">
    <location>
        <begin position="923"/>
        <end position="943"/>
    </location>
</feature>
<feature type="transmembrane region" description="Helical" evidence="2">
    <location>
        <begin position="982"/>
        <end position="1002"/>
    </location>
</feature>
<feature type="transmembrane region" description="Helical" evidence="2">
    <location>
        <begin position="1017"/>
        <end position="1036"/>
    </location>
</feature>
<feature type="zinc finger region" description="RING-CH-type" evidence="3">
    <location>
        <begin position="60"/>
        <end position="121"/>
    </location>
</feature>
<feature type="region of interest" description="Disordered" evidence="4">
    <location>
        <begin position="1"/>
        <end position="60"/>
    </location>
</feature>
<feature type="region of interest" description="Disordered" evidence="4">
    <location>
        <begin position="237"/>
        <end position="273"/>
    </location>
</feature>
<feature type="region of interest" description="Disordered" evidence="4">
    <location>
        <begin position="762"/>
        <end position="784"/>
    </location>
</feature>
<feature type="coiled-coil region" evidence="2">
    <location>
        <begin position="286"/>
        <end position="308"/>
    </location>
</feature>
<feature type="compositionally biased region" description="Low complexity" evidence="4">
    <location>
        <begin position="10"/>
        <end position="44"/>
    </location>
</feature>
<feature type="compositionally biased region" description="Basic and acidic residues" evidence="4">
    <location>
        <begin position="237"/>
        <end position="246"/>
    </location>
</feature>
<feature type="binding site" evidence="3">
    <location>
        <position position="68"/>
    </location>
    <ligand>
        <name>Zn(2+)</name>
        <dbReference type="ChEBI" id="CHEBI:29105"/>
        <label>1</label>
    </ligand>
</feature>
<feature type="binding site" evidence="3">
    <location>
        <position position="71"/>
    </location>
    <ligand>
        <name>Zn(2+)</name>
        <dbReference type="ChEBI" id="CHEBI:29105"/>
        <label>1</label>
    </ligand>
</feature>
<feature type="binding site" evidence="3">
    <location>
        <position position="85"/>
    </location>
    <ligand>
        <name>Zn(2+)</name>
        <dbReference type="ChEBI" id="CHEBI:29105"/>
        <label>2</label>
    </ligand>
</feature>
<feature type="binding site" evidence="3">
    <location>
        <position position="87"/>
    </location>
    <ligand>
        <name>Zn(2+)</name>
        <dbReference type="ChEBI" id="CHEBI:29105"/>
        <label>2</label>
    </ligand>
</feature>
<feature type="binding site" evidence="3">
    <location>
        <position position="95"/>
    </location>
    <ligand>
        <name>Zn(2+)</name>
        <dbReference type="ChEBI" id="CHEBI:29105"/>
        <label>1</label>
    </ligand>
</feature>
<feature type="binding site" evidence="3">
    <location>
        <position position="98"/>
    </location>
    <ligand>
        <name>Zn(2+)</name>
        <dbReference type="ChEBI" id="CHEBI:29105"/>
        <label>1</label>
    </ligand>
</feature>
<feature type="binding site" evidence="3">
    <location>
        <position position="111"/>
    </location>
    <ligand>
        <name>Zn(2+)</name>
        <dbReference type="ChEBI" id="CHEBI:29105"/>
        <label>2</label>
    </ligand>
</feature>
<feature type="binding site" evidence="3">
    <location>
        <position position="114"/>
    </location>
    <ligand>
        <name>Zn(2+)</name>
        <dbReference type="ChEBI" id="CHEBI:29105"/>
        <label>2</label>
    </ligand>
</feature>
<feature type="splice variant" id="VSP_046615" description="In isoform 2." evidence="7">
    <original>DR</original>
    <variation>E</variation>
    <location>
        <begin position="788"/>
        <end position="789"/>
    </location>
</feature>
<feature type="mutagenesis site" description="In cer9-1; Semiglossy shoots." evidence="5">
    <original>C</original>
    <variation>Y</variation>
    <location>
        <position position="114"/>
    </location>
</feature>
<feature type="mutagenesis site" description="In sud1-1; No visible phenotype except glossy shoots, but is able to suppress the dry2 phenotype." evidence="6">
    <original>G</original>
    <variation>R</variation>
    <location>
        <position position="218"/>
    </location>
</feature>
<feature type="mutagenesis site" description="In sud1-3; Able to suppress the dry2 phenotype." evidence="6">
    <original>R</original>
    <variation>K</variation>
    <location>
        <position position="244"/>
    </location>
</feature>
<feature type="mutagenesis site" description="In sud1-2; Able to suppress the dry2 phenotype." evidence="6">
    <original>G</original>
    <variation>E</variation>
    <location>
        <position position="360"/>
    </location>
</feature>
<feature type="sequence conflict" description="In Ref. 3; BAF01965." evidence="7" ref="3">
    <original>V</original>
    <variation>D</variation>
    <location>
        <position position="816"/>
    </location>
</feature>
<accession>F4JKK0</accession>
<accession>F4JKK1</accession>
<accession>O49494</accession>
<accession>Q0WLP2</accession>
<gene>
    <name type="primary">SUD1</name>
    <name type="synonym">CER9</name>
    <name type="ordered locus">At4g34100</name>
    <name type="ORF">F28A23.140</name>
</gene>
<sequence length="1108" mass="123004">MEISPADSLSISGAAASEVVSEPSVSSSSSSSSPNQASPNPFSNMDPAVSTATGSRYVDDDEDEEDVCRICRNPGDADNPLRYPCACSGSIKFVHQDCLLQWLNHSNARQCEVCKHPFSFSPVYADNAPSRLPFQEFVVGIAMKACHVLQFFLRLSFVLSVWLLTIPFITFWIWRLAFVRTFGEAQRLFLSHISTTVILTDCLHGFLLSASIVFIFLGATSLRDYFRHLRELGGQEERDDDVDRNGARAARRPAGQANRNLAGEGNGEDAGDQGAAVGQIARRNPENVLARLDIQAARLEAQVEQMFDGLDDADGAEDVPFDELVGMQGPVFHLVENAFTVLASNMIFLGVVIFVPFTLGRIILYHVSWLFAAARGPAVAASLHLTDTGLSLENITLKSALTAVSNLTSEGQGNGLLGQLTEMMKVNGSELNGANNTLSVATDLLKGSTVGASKLSDITTLAVGYMFIVFLVFLYLGIIALIRYAKGEPLTVGRFYGIASIVEAVPSLLRQFLAAMRHLMTMIKVAFLLVIELGVFPLMCGWWLDVCTVRMFGKTMSHRVQFLSISPLASSLVHWVVGIMYMLQISIFVSLLRGVLRPGVLYFLRDPADPNYNPFRDLIDDPVHKHARRVLLSVAVYGSLIVMLVFLPVKLAIRMAPSIFPLDISVSDPFTEIPADMLLFQICIPFIIEHFRLRTTIKSLLRCWFTGVGWALGLTDFLLPRPEDNIGQDNGNGEPGRQNRAQVLQVGGPDRAMAALPVADDPNRSRLRAGNVNTGEEYEDDDEQSDSDRYNFVVRIILLLLVAWVTLLLFNSALIVVPVSLGRALFSAIPILPITHGIKCNDLYAFVIGTYAFWTTISGARYAIEHVKSKRTSVLLNQIWKWCGIVFKSSVLLAIWVFIIPVLIGLLFELLVIVPMRVPVDESPVFLLYQDWALGLIFLKIWTRLVMLDHMLPIVDDSWRAKFERVREDGFSRLQGLWVLREIVFPIVMKLLTALCVPYVLARGVFPMLGYPLVVNSAVYRFAWIGCLSVSLFCFCAKRCHVWFRNLHNSIRDDRYLIGRRLHNFGEAALANQNQNQSSEDAGDGVLIGREGDVDNGLRLRRAIQQEA</sequence>
<dbReference type="EC" id="2.3.2.27"/>
<dbReference type="EMBL" id="AL021961">
    <property type="protein sequence ID" value="CAA17562.1"/>
    <property type="status" value="ALT_SEQ"/>
    <property type="molecule type" value="Genomic_DNA"/>
</dbReference>
<dbReference type="EMBL" id="AL161584">
    <property type="protein sequence ID" value="CAB80127.1"/>
    <property type="status" value="ALT_SEQ"/>
    <property type="molecule type" value="Genomic_DNA"/>
</dbReference>
<dbReference type="EMBL" id="CP002687">
    <property type="protein sequence ID" value="AEE86323.1"/>
    <property type="molecule type" value="Genomic_DNA"/>
</dbReference>
<dbReference type="EMBL" id="CP002687">
    <property type="protein sequence ID" value="AEE86324.1"/>
    <property type="molecule type" value="Genomic_DNA"/>
</dbReference>
<dbReference type="EMBL" id="AK230154">
    <property type="protein sequence ID" value="BAF01965.1"/>
    <property type="molecule type" value="mRNA"/>
</dbReference>
<dbReference type="PIR" id="T05426">
    <property type="entry name" value="T05426"/>
</dbReference>
<dbReference type="RefSeq" id="NP_001119113.1">
    <molecule id="F4JKK0-2"/>
    <property type="nucleotide sequence ID" value="NM_001125641.1"/>
</dbReference>
<dbReference type="RefSeq" id="NP_195136.3">
    <molecule id="F4JKK0-1"/>
    <property type="nucleotide sequence ID" value="NM_119571.5"/>
</dbReference>
<dbReference type="SMR" id="F4JKK0"/>
<dbReference type="BioGRID" id="14838">
    <property type="interactions" value="1"/>
</dbReference>
<dbReference type="FunCoup" id="F4JKK0">
    <property type="interactions" value="4811"/>
</dbReference>
<dbReference type="IntAct" id="F4JKK0">
    <property type="interactions" value="1"/>
</dbReference>
<dbReference type="STRING" id="3702.F4JKK0"/>
<dbReference type="TCDB" id="3.A.16.1.5">
    <property type="family name" value="the endoplasmic reticular retrotranslocon (er-rt) family"/>
</dbReference>
<dbReference type="SwissPalm" id="F4JKK0"/>
<dbReference type="PaxDb" id="3702-AT4G34100.1"/>
<dbReference type="ProteomicsDB" id="228398">
    <molecule id="F4JKK0-1"/>
</dbReference>
<dbReference type="EnsemblPlants" id="AT4G34100.1">
    <molecule id="F4JKK0-1"/>
    <property type="protein sequence ID" value="AT4G34100.1"/>
    <property type="gene ID" value="AT4G34100"/>
</dbReference>
<dbReference type="EnsemblPlants" id="AT4G34100.2">
    <molecule id="F4JKK0-2"/>
    <property type="protein sequence ID" value="AT4G34100.2"/>
    <property type="gene ID" value="AT4G34100"/>
</dbReference>
<dbReference type="GeneID" id="829556"/>
<dbReference type="Gramene" id="AT4G34100.1">
    <molecule id="F4JKK0-1"/>
    <property type="protein sequence ID" value="AT4G34100.1"/>
    <property type="gene ID" value="AT4G34100"/>
</dbReference>
<dbReference type="Gramene" id="AT4G34100.2">
    <molecule id="F4JKK0-2"/>
    <property type="protein sequence ID" value="AT4G34100.2"/>
    <property type="gene ID" value="AT4G34100"/>
</dbReference>
<dbReference type="KEGG" id="ath:AT4G34100"/>
<dbReference type="Araport" id="AT4G34100"/>
<dbReference type="TAIR" id="AT4G34100">
    <property type="gene designation" value="CER9"/>
</dbReference>
<dbReference type="eggNOG" id="KOG1609">
    <property type="taxonomic scope" value="Eukaryota"/>
</dbReference>
<dbReference type="InParanoid" id="F4JKK0"/>
<dbReference type="OMA" id="QGRIVIM"/>
<dbReference type="OrthoDB" id="1108038at2759"/>
<dbReference type="UniPathway" id="UPA00143"/>
<dbReference type="PRO" id="PR:F4JKK0"/>
<dbReference type="Proteomes" id="UP000006548">
    <property type="component" value="Chromosome 4"/>
</dbReference>
<dbReference type="ExpressionAtlas" id="F4JKK0">
    <property type="expression patterns" value="baseline and differential"/>
</dbReference>
<dbReference type="GO" id="GO:0016020">
    <property type="term" value="C:membrane"/>
    <property type="evidence" value="ECO:0007669"/>
    <property type="project" value="UniProtKB-SubCell"/>
</dbReference>
<dbReference type="GO" id="GO:0004842">
    <property type="term" value="F:ubiquitin-protein transferase activity"/>
    <property type="evidence" value="ECO:0000304"/>
    <property type="project" value="TAIR"/>
</dbReference>
<dbReference type="GO" id="GO:0008270">
    <property type="term" value="F:zinc ion binding"/>
    <property type="evidence" value="ECO:0007669"/>
    <property type="project" value="UniProtKB-KW"/>
</dbReference>
<dbReference type="GO" id="GO:0042335">
    <property type="term" value="P:cuticle development"/>
    <property type="evidence" value="ECO:0000315"/>
    <property type="project" value="CACAO"/>
</dbReference>
<dbReference type="GO" id="GO:0010143">
    <property type="term" value="P:cutin biosynthetic process"/>
    <property type="evidence" value="ECO:0000315"/>
    <property type="project" value="TAIR"/>
</dbReference>
<dbReference type="GO" id="GO:0008299">
    <property type="term" value="P:isoprenoid biosynthetic process"/>
    <property type="evidence" value="ECO:0000315"/>
    <property type="project" value="TAIR"/>
</dbReference>
<dbReference type="GO" id="GO:1900486">
    <property type="term" value="P:positive regulation of isopentenyl diphosphate biosynthetic process, mevalonate pathway"/>
    <property type="evidence" value="ECO:0000315"/>
    <property type="project" value="TAIR"/>
</dbReference>
<dbReference type="GO" id="GO:0016567">
    <property type="term" value="P:protein ubiquitination"/>
    <property type="evidence" value="ECO:0007669"/>
    <property type="project" value="UniProtKB-UniPathway"/>
</dbReference>
<dbReference type="GO" id="GO:0009414">
    <property type="term" value="P:response to water deprivation"/>
    <property type="evidence" value="ECO:0000316"/>
    <property type="project" value="TAIR"/>
</dbReference>
<dbReference type="GO" id="GO:0010345">
    <property type="term" value="P:suberin biosynthetic process"/>
    <property type="evidence" value="ECO:0000315"/>
    <property type="project" value="TAIR"/>
</dbReference>
<dbReference type="GO" id="GO:0010025">
    <property type="term" value="P:wax biosynthetic process"/>
    <property type="evidence" value="ECO:0000315"/>
    <property type="project" value="TAIR"/>
</dbReference>
<dbReference type="CDD" id="cd16702">
    <property type="entry name" value="RING_CH-C4HC3_MARCH6"/>
    <property type="match status" value="1"/>
</dbReference>
<dbReference type="FunFam" id="3.30.40.10:FF:000288">
    <property type="entry name" value="Probable E3 ubiquitin ligase SUD1"/>
    <property type="match status" value="1"/>
</dbReference>
<dbReference type="Gene3D" id="3.30.40.10">
    <property type="entry name" value="Zinc/RING finger domain, C3HC4 (zinc finger)"/>
    <property type="match status" value="1"/>
</dbReference>
<dbReference type="InterPro" id="IPR056521">
    <property type="entry name" value="MARCHF6-like_C"/>
</dbReference>
<dbReference type="InterPro" id="IPR001841">
    <property type="entry name" value="Znf_RING"/>
</dbReference>
<dbReference type="InterPro" id="IPR011016">
    <property type="entry name" value="Znf_RING-CH"/>
</dbReference>
<dbReference type="InterPro" id="IPR013083">
    <property type="entry name" value="Znf_RING/FYVE/PHD"/>
</dbReference>
<dbReference type="PANTHER" id="PTHR13145:SF0">
    <property type="entry name" value="E3 UBIQUITIN-PROTEIN LIGASE MARCHF6"/>
    <property type="match status" value="1"/>
</dbReference>
<dbReference type="PANTHER" id="PTHR13145">
    <property type="entry name" value="SSM4 PROTEIN"/>
    <property type="match status" value="1"/>
</dbReference>
<dbReference type="Pfam" id="PF23113">
    <property type="entry name" value="MARCHF6_C"/>
    <property type="match status" value="1"/>
</dbReference>
<dbReference type="Pfam" id="PF12906">
    <property type="entry name" value="RINGv"/>
    <property type="match status" value="1"/>
</dbReference>
<dbReference type="SMART" id="SM00744">
    <property type="entry name" value="RINGv"/>
    <property type="match status" value="1"/>
</dbReference>
<dbReference type="SUPFAM" id="SSF57850">
    <property type="entry name" value="RING/U-box"/>
    <property type="match status" value="1"/>
</dbReference>
<dbReference type="PROSITE" id="PS51292">
    <property type="entry name" value="ZF_RING_CH"/>
    <property type="match status" value="1"/>
</dbReference>
<reference key="1">
    <citation type="journal article" date="1999" name="Nature">
        <title>Sequence and analysis of chromosome 4 of the plant Arabidopsis thaliana.</title>
        <authorList>
            <person name="Mayer K.F.X."/>
            <person name="Schueller C."/>
            <person name="Wambutt R."/>
            <person name="Murphy G."/>
            <person name="Volckaert G."/>
            <person name="Pohl T."/>
            <person name="Duesterhoeft A."/>
            <person name="Stiekema W."/>
            <person name="Entian K.-D."/>
            <person name="Terryn N."/>
            <person name="Harris B."/>
            <person name="Ansorge W."/>
            <person name="Brandt P."/>
            <person name="Grivell L.A."/>
            <person name="Rieger M."/>
            <person name="Weichselgartner M."/>
            <person name="de Simone V."/>
            <person name="Obermaier B."/>
            <person name="Mache R."/>
            <person name="Mueller M."/>
            <person name="Kreis M."/>
            <person name="Delseny M."/>
            <person name="Puigdomenech P."/>
            <person name="Watson M."/>
            <person name="Schmidtheini T."/>
            <person name="Reichert B."/>
            <person name="Portetelle D."/>
            <person name="Perez-Alonso M."/>
            <person name="Boutry M."/>
            <person name="Bancroft I."/>
            <person name="Vos P."/>
            <person name="Hoheisel J."/>
            <person name="Zimmermann W."/>
            <person name="Wedler H."/>
            <person name="Ridley P."/>
            <person name="Langham S.-A."/>
            <person name="McCullagh B."/>
            <person name="Bilham L."/>
            <person name="Robben J."/>
            <person name="van der Schueren J."/>
            <person name="Grymonprez B."/>
            <person name="Chuang Y.-J."/>
            <person name="Vandenbussche F."/>
            <person name="Braeken M."/>
            <person name="Weltjens I."/>
            <person name="Voet M."/>
            <person name="Bastiaens I."/>
            <person name="Aert R."/>
            <person name="Defoor E."/>
            <person name="Weitzenegger T."/>
            <person name="Bothe G."/>
            <person name="Ramsperger U."/>
            <person name="Hilbert H."/>
            <person name="Braun M."/>
            <person name="Holzer E."/>
            <person name="Brandt A."/>
            <person name="Peters S."/>
            <person name="van Staveren M."/>
            <person name="Dirkse W."/>
            <person name="Mooijman P."/>
            <person name="Klein Lankhorst R."/>
            <person name="Rose M."/>
            <person name="Hauf J."/>
            <person name="Koetter P."/>
            <person name="Berneiser S."/>
            <person name="Hempel S."/>
            <person name="Feldpausch M."/>
            <person name="Lamberth S."/>
            <person name="Van den Daele H."/>
            <person name="De Keyser A."/>
            <person name="Buysshaert C."/>
            <person name="Gielen J."/>
            <person name="Villarroel R."/>
            <person name="De Clercq R."/>
            <person name="van Montagu M."/>
            <person name="Rogers J."/>
            <person name="Cronin A."/>
            <person name="Quail M.A."/>
            <person name="Bray-Allen S."/>
            <person name="Clark L."/>
            <person name="Doggett J."/>
            <person name="Hall S."/>
            <person name="Kay M."/>
            <person name="Lennard N."/>
            <person name="McLay K."/>
            <person name="Mayes R."/>
            <person name="Pettett A."/>
            <person name="Rajandream M.A."/>
            <person name="Lyne M."/>
            <person name="Benes V."/>
            <person name="Rechmann S."/>
            <person name="Borkova D."/>
            <person name="Bloecker H."/>
            <person name="Scharfe M."/>
            <person name="Grimm M."/>
            <person name="Loehnert T.-H."/>
            <person name="Dose S."/>
            <person name="de Haan M."/>
            <person name="Maarse A.C."/>
            <person name="Schaefer M."/>
            <person name="Mueller-Auer S."/>
            <person name="Gabel C."/>
            <person name="Fuchs M."/>
            <person name="Fartmann B."/>
            <person name="Granderath K."/>
            <person name="Dauner D."/>
            <person name="Herzl A."/>
            <person name="Neumann S."/>
            <person name="Argiriou A."/>
            <person name="Vitale D."/>
            <person name="Liguori R."/>
            <person name="Piravandi E."/>
            <person name="Massenet O."/>
            <person name="Quigley F."/>
            <person name="Clabauld G."/>
            <person name="Muendlein A."/>
            <person name="Felber R."/>
            <person name="Schnabl S."/>
            <person name="Hiller R."/>
            <person name="Schmidt W."/>
            <person name="Lecharny A."/>
            <person name="Aubourg S."/>
            <person name="Chefdor F."/>
            <person name="Cooke R."/>
            <person name="Berger C."/>
            <person name="Monfort A."/>
            <person name="Casacuberta E."/>
            <person name="Gibbons T."/>
            <person name="Weber N."/>
            <person name="Vandenbol M."/>
            <person name="Bargues M."/>
            <person name="Terol J."/>
            <person name="Torres A."/>
            <person name="Perez-Perez A."/>
            <person name="Purnelle B."/>
            <person name="Bent E."/>
            <person name="Johnson S."/>
            <person name="Tacon D."/>
            <person name="Jesse T."/>
            <person name="Heijnen L."/>
            <person name="Schwarz S."/>
            <person name="Scholler P."/>
            <person name="Heber S."/>
            <person name="Francs P."/>
            <person name="Bielke C."/>
            <person name="Frishman D."/>
            <person name="Haase D."/>
            <person name="Lemcke K."/>
            <person name="Mewes H.-W."/>
            <person name="Stocker S."/>
            <person name="Zaccaria P."/>
            <person name="Bevan M."/>
            <person name="Wilson R.K."/>
            <person name="de la Bastide M."/>
            <person name="Habermann K."/>
            <person name="Parnell L."/>
            <person name="Dedhia N."/>
            <person name="Gnoj L."/>
            <person name="Schutz K."/>
            <person name="Huang E."/>
            <person name="Spiegel L."/>
            <person name="Sekhon M."/>
            <person name="Murray J."/>
            <person name="Sheet P."/>
            <person name="Cordes M."/>
            <person name="Abu-Threideh J."/>
            <person name="Stoneking T."/>
            <person name="Kalicki J."/>
            <person name="Graves T."/>
            <person name="Harmon G."/>
            <person name="Edwards J."/>
            <person name="Latreille P."/>
            <person name="Courtney L."/>
            <person name="Cloud J."/>
            <person name="Abbott A."/>
            <person name="Scott K."/>
            <person name="Johnson D."/>
            <person name="Minx P."/>
            <person name="Bentley D."/>
            <person name="Fulton B."/>
            <person name="Miller N."/>
            <person name="Greco T."/>
            <person name="Kemp K."/>
            <person name="Kramer J."/>
            <person name="Fulton L."/>
            <person name="Mardis E."/>
            <person name="Dante M."/>
            <person name="Pepin K."/>
            <person name="Hillier L.W."/>
            <person name="Nelson J."/>
            <person name="Spieth J."/>
            <person name="Ryan E."/>
            <person name="Andrews S."/>
            <person name="Geisel C."/>
            <person name="Layman D."/>
            <person name="Du H."/>
            <person name="Ali J."/>
            <person name="Berghoff A."/>
            <person name="Jones K."/>
            <person name="Drone K."/>
            <person name="Cotton M."/>
            <person name="Joshu C."/>
            <person name="Antonoiu B."/>
            <person name="Zidanic M."/>
            <person name="Strong C."/>
            <person name="Sun H."/>
            <person name="Lamar B."/>
            <person name="Yordan C."/>
            <person name="Ma P."/>
            <person name="Zhong J."/>
            <person name="Preston R."/>
            <person name="Vil D."/>
            <person name="Shekher M."/>
            <person name="Matero A."/>
            <person name="Shah R."/>
            <person name="Swaby I.K."/>
            <person name="O'Shaughnessy A."/>
            <person name="Rodriguez M."/>
            <person name="Hoffman J."/>
            <person name="Till S."/>
            <person name="Granat S."/>
            <person name="Shohdy N."/>
            <person name="Hasegawa A."/>
            <person name="Hameed A."/>
            <person name="Lodhi M."/>
            <person name="Johnson A."/>
            <person name="Chen E."/>
            <person name="Marra M.A."/>
            <person name="Martienssen R."/>
            <person name="McCombie W.R."/>
        </authorList>
    </citation>
    <scope>NUCLEOTIDE SEQUENCE [LARGE SCALE GENOMIC DNA]</scope>
    <source>
        <strain>cv. Columbia</strain>
    </source>
</reference>
<reference key="2">
    <citation type="journal article" date="2017" name="Plant J.">
        <title>Araport11: a complete reannotation of the Arabidopsis thaliana reference genome.</title>
        <authorList>
            <person name="Cheng C.Y."/>
            <person name="Krishnakumar V."/>
            <person name="Chan A.P."/>
            <person name="Thibaud-Nissen F."/>
            <person name="Schobel S."/>
            <person name="Town C.D."/>
        </authorList>
    </citation>
    <scope>GENOME REANNOTATION</scope>
    <source>
        <strain>cv. Columbia</strain>
    </source>
</reference>
<reference key="3">
    <citation type="submission" date="2006-07" db="EMBL/GenBank/DDBJ databases">
        <title>Large-scale analysis of RIKEN Arabidopsis full-length (RAFL) cDNAs.</title>
        <authorList>
            <person name="Totoki Y."/>
            <person name="Seki M."/>
            <person name="Ishida J."/>
            <person name="Nakajima M."/>
            <person name="Enju A."/>
            <person name="Kamiya A."/>
            <person name="Narusaka M."/>
            <person name="Shin-i T."/>
            <person name="Nakagawa M."/>
            <person name="Sakamoto N."/>
            <person name="Oishi K."/>
            <person name="Kohara Y."/>
            <person name="Kobayashi M."/>
            <person name="Toyoda A."/>
            <person name="Sakaki Y."/>
            <person name="Sakurai T."/>
            <person name="Iida K."/>
            <person name="Akiyama K."/>
            <person name="Satou M."/>
            <person name="Toyoda T."/>
            <person name="Konagaya A."/>
            <person name="Carninci P."/>
            <person name="Kawai J."/>
            <person name="Hayashizaki Y."/>
            <person name="Shinozaki K."/>
        </authorList>
    </citation>
    <scope>NUCLEOTIDE SEQUENCE [LARGE SCALE MRNA] OF 327-1108 (ISOFORM 1)</scope>
    <source>
        <strain>cv. Columbia</strain>
    </source>
</reference>
<reference key="4">
    <citation type="journal article" date="2012" name="Plant Physiol.">
        <title>Arabidopsis ECERIFERUM9 involvement in cuticle formation and maintenance of plant water status.</title>
        <authorList>
            <person name="Lue S."/>
            <person name="Zhao H."/>
            <person name="Des Marais D.L."/>
            <person name="Parsons E.P."/>
            <person name="Wen X."/>
            <person name="Xu X."/>
            <person name="Bangarusamy D.K."/>
            <person name="Wang G."/>
            <person name="Rowland O."/>
            <person name="Juenger T."/>
            <person name="Bressan R.A."/>
            <person name="Jenks M.A."/>
        </authorList>
    </citation>
    <scope>FUNCTION</scope>
    <scope>MUTAGENESIS OF CYS-114</scope>
    <scope>DISRUPTION PHENOTYPE</scope>
    <scope>DEVELOPMENTAL STAGE</scope>
    <scope>TISSUE SPECIFICITY</scope>
</reference>
<reference key="5">
    <citation type="journal article" date="2013" name="Plant Cell">
        <title>The SUD1 gene encodes a putative E3 ubiquitin ligase and is a positive regulator of 3-hydroxy-3-methylglutaryl coenzyme a reductase activity in Arabidopsis.</title>
        <authorList>
            <person name="Doblas V.G."/>
            <person name="Amorim-Silva V."/>
            <person name="Pose D."/>
            <person name="Rosado A."/>
            <person name="Esteban A."/>
            <person name="Arro M."/>
            <person name="Azevedo H."/>
            <person name="Bombarely A."/>
            <person name="Borsani O."/>
            <person name="Valpuesta V."/>
            <person name="Ferrer A."/>
            <person name="Tavares R.M."/>
            <person name="Botella M.A."/>
        </authorList>
    </citation>
    <scope>FUNCTION</scope>
    <scope>MUTAGENESIS OF GLY-218; ARG-244 AND GLY-360</scope>
</reference>
<comment type="function">
    <text evidence="1 5 6">Probable E3 ubiquitin ligase acting as a positive post-transcriptional regulator of 3-hydroxy-3-methylglutaryl-coenzyme A reductase activity. Might be involved in the quality control that degrades misfolded proteins (By similarity).</text>
</comment>
<comment type="catalytic activity">
    <reaction>
        <text>S-ubiquitinyl-[E2 ubiquitin-conjugating enzyme]-L-cysteine + [acceptor protein]-L-lysine = [E2 ubiquitin-conjugating enzyme]-L-cysteine + N(6)-ubiquitinyl-[acceptor protein]-L-lysine.</text>
        <dbReference type="EC" id="2.3.2.27"/>
    </reaction>
</comment>
<comment type="pathway">
    <text>Protein modification; protein ubiquitination.</text>
</comment>
<comment type="subcellular location">
    <subcellularLocation>
        <location evidence="7">Membrane</location>
        <topology evidence="7">Multi-pass membrane protein</topology>
    </subcellularLocation>
</comment>
<comment type="alternative products">
    <event type="alternative splicing"/>
    <isoform>
        <id>F4JKK0-1</id>
        <name>1</name>
        <sequence type="displayed"/>
    </isoform>
    <isoform>
        <id>F4JKK0-2</id>
        <name>2</name>
        <sequence type="described" ref="VSP_046615"/>
    </isoform>
</comment>
<comment type="tissue specificity">
    <text evidence="5">Expressed in cotyledons, leaves, roots, stems, inflorescences and siliques. Expression higher at the top than at the base of the stem.</text>
</comment>
<comment type="developmental stage">
    <text evidence="5">Constitutively expressed throughout development.</text>
</comment>
<comment type="domain">
    <text evidence="3">The RING-CH-type zinc finger domain is required for E3 ligase activity.</text>
</comment>
<comment type="disruption phenotype">
    <text evidence="5">Semiglossy stem. Elevated drought tolerance and reduced transpiration rate. Elevated amounts of 18-carbon-length cutin monomers and shift in the cuticular wax profile toward the very-long-chain free fatty acids tetracosanoic acid (C24) and hexacosanoic acid (C26).</text>
</comment>
<comment type="sequence caution" evidence="7">
    <conflict type="erroneous gene model prediction">
        <sequence resource="EMBL-CDS" id="CAA17562"/>
    </conflict>
</comment>
<comment type="sequence caution" evidence="7">
    <conflict type="erroneous gene model prediction">
        <sequence resource="EMBL-CDS" id="CAB80127"/>
    </conflict>
</comment>
<protein>
    <recommendedName>
        <fullName>Probable E3 ubiquitin ligase SUD1</fullName>
        <ecNumber>2.3.2.27</ecNumber>
    </recommendedName>
    <alternativeName>
        <fullName>Protein ECERIFERUM 9</fullName>
    </alternativeName>
    <alternativeName>
        <fullName>Protein SUPPRESSOR OF DRY2 DEFFECTS 1</fullName>
        <shortName>AtSUD1</shortName>
    </alternativeName>
    <alternativeName>
        <fullName evidence="7">RING-type E3 ubiquitin transferase SUD1</fullName>
    </alternativeName>
    <alternativeName>
        <fullName>RING/U-box domain-containing protein</fullName>
    </alternativeName>
</protein>
<organism>
    <name type="scientific">Arabidopsis thaliana</name>
    <name type="common">Mouse-ear cress</name>
    <dbReference type="NCBI Taxonomy" id="3702"/>
    <lineage>
        <taxon>Eukaryota</taxon>
        <taxon>Viridiplantae</taxon>
        <taxon>Streptophyta</taxon>
        <taxon>Embryophyta</taxon>
        <taxon>Tracheophyta</taxon>
        <taxon>Spermatophyta</taxon>
        <taxon>Magnoliopsida</taxon>
        <taxon>eudicotyledons</taxon>
        <taxon>Gunneridae</taxon>
        <taxon>Pentapetalae</taxon>
        <taxon>rosids</taxon>
        <taxon>malvids</taxon>
        <taxon>Brassicales</taxon>
        <taxon>Brassicaceae</taxon>
        <taxon>Camelineae</taxon>
        <taxon>Arabidopsis</taxon>
    </lineage>
</organism>
<keyword id="KW-0025">Alternative splicing</keyword>
<keyword id="KW-0175">Coiled coil</keyword>
<keyword id="KW-0472">Membrane</keyword>
<keyword id="KW-0479">Metal-binding</keyword>
<keyword id="KW-1185">Reference proteome</keyword>
<keyword id="KW-0808">Transferase</keyword>
<keyword id="KW-0809">Transit peptide</keyword>
<keyword id="KW-0812">Transmembrane</keyword>
<keyword id="KW-1133">Transmembrane helix</keyword>
<keyword id="KW-0833">Ubl conjugation pathway</keyword>
<keyword id="KW-0862">Zinc</keyword>
<keyword id="KW-0863">Zinc-finger</keyword>
<proteinExistence type="evidence at protein level"/>
<name>SUD1_ARATH</name>